<proteinExistence type="inferred from homology"/>
<comment type="function">
    <text evidence="1">Catalyzes the phosphorylation of N-acetyl-D-glucosamine (GlcNAc) derived from cell-wall degradation, yielding GlcNAc-6-P.</text>
</comment>
<comment type="catalytic activity">
    <reaction evidence="1">
        <text>N-acetyl-D-glucosamine + ATP = N-acetyl-D-glucosamine 6-phosphate + ADP + H(+)</text>
        <dbReference type="Rhea" id="RHEA:17417"/>
        <dbReference type="ChEBI" id="CHEBI:15378"/>
        <dbReference type="ChEBI" id="CHEBI:30616"/>
        <dbReference type="ChEBI" id="CHEBI:57513"/>
        <dbReference type="ChEBI" id="CHEBI:456216"/>
        <dbReference type="ChEBI" id="CHEBI:506227"/>
        <dbReference type="EC" id="2.7.1.59"/>
    </reaction>
</comment>
<comment type="pathway">
    <text evidence="1">Cell wall biogenesis; peptidoglycan recycling.</text>
</comment>
<comment type="similarity">
    <text evidence="1">Belongs to the ROK (NagC/XylR) family. NagK subfamily.</text>
</comment>
<name>NAGK_ECOSM</name>
<sequence>MYYGFDIGGTKIALGVFDSGRQLQWEKRVPTPRDSYDAFLDAVCELVAEADQRFGCKGSVGIGIPGMPETEDGTLYAANVPAASGKPLRADLSARLDRDVRLDNDANCFALSEAWDDEFTQYPLVMGLILGTGVGGGLIFNGKPITGKSYITGEFGHMRLPVDALTMMGLDFPLRRCGCGQHGCIENYLSGRGFAWLYQHYYHQPLQAPEIIALYDQGDEQARAHVERYLDLLAVCLGNILTIVDPDLVVIGGGLSNFPAITTQLADRLPRHLLPVARVPRIERARHGDAGGMRGAAFLHLTD</sequence>
<keyword id="KW-0067">ATP-binding</keyword>
<keyword id="KW-0119">Carbohydrate metabolism</keyword>
<keyword id="KW-0418">Kinase</keyword>
<keyword id="KW-0479">Metal-binding</keyword>
<keyword id="KW-0547">Nucleotide-binding</keyword>
<keyword id="KW-0808">Transferase</keyword>
<keyword id="KW-0862">Zinc</keyword>
<gene>
    <name evidence="1" type="primary">nagK</name>
    <name type="ordered locus">EcSMS35_2007</name>
</gene>
<accession>B1LI25</accession>
<evidence type="ECO:0000255" key="1">
    <source>
        <dbReference type="HAMAP-Rule" id="MF_01271"/>
    </source>
</evidence>
<organism>
    <name type="scientific">Escherichia coli (strain SMS-3-5 / SECEC)</name>
    <dbReference type="NCBI Taxonomy" id="439855"/>
    <lineage>
        <taxon>Bacteria</taxon>
        <taxon>Pseudomonadati</taxon>
        <taxon>Pseudomonadota</taxon>
        <taxon>Gammaproteobacteria</taxon>
        <taxon>Enterobacterales</taxon>
        <taxon>Enterobacteriaceae</taxon>
        <taxon>Escherichia</taxon>
    </lineage>
</organism>
<dbReference type="EC" id="2.7.1.59" evidence="1"/>
<dbReference type="EMBL" id="CP000970">
    <property type="protein sequence ID" value="ACB17918.1"/>
    <property type="molecule type" value="Genomic_DNA"/>
</dbReference>
<dbReference type="RefSeq" id="WP_000291270.1">
    <property type="nucleotide sequence ID" value="NC_010498.1"/>
</dbReference>
<dbReference type="SMR" id="B1LI25"/>
<dbReference type="GeneID" id="75171243"/>
<dbReference type="KEGG" id="ecm:EcSMS35_2007"/>
<dbReference type="HOGENOM" id="CLU_036604_0_3_6"/>
<dbReference type="UniPathway" id="UPA00544"/>
<dbReference type="Proteomes" id="UP000007011">
    <property type="component" value="Chromosome"/>
</dbReference>
<dbReference type="GO" id="GO:0005524">
    <property type="term" value="F:ATP binding"/>
    <property type="evidence" value="ECO:0007669"/>
    <property type="project" value="UniProtKB-UniRule"/>
</dbReference>
<dbReference type="GO" id="GO:0045127">
    <property type="term" value="F:N-acetylglucosamine kinase activity"/>
    <property type="evidence" value="ECO:0007669"/>
    <property type="project" value="UniProtKB-UniRule"/>
</dbReference>
<dbReference type="GO" id="GO:0008270">
    <property type="term" value="F:zinc ion binding"/>
    <property type="evidence" value="ECO:0007669"/>
    <property type="project" value="UniProtKB-UniRule"/>
</dbReference>
<dbReference type="GO" id="GO:0006044">
    <property type="term" value="P:N-acetylglucosamine metabolic process"/>
    <property type="evidence" value="ECO:0007669"/>
    <property type="project" value="UniProtKB-UniRule"/>
</dbReference>
<dbReference type="GO" id="GO:0009254">
    <property type="term" value="P:peptidoglycan turnover"/>
    <property type="evidence" value="ECO:0007669"/>
    <property type="project" value="UniProtKB-UniRule"/>
</dbReference>
<dbReference type="CDD" id="cd24057">
    <property type="entry name" value="ASKHA_NBD_ROK_NAGK"/>
    <property type="match status" value="1"/>
</dbReference>
<dbReference type="FunFam" id="3.30.420.40:FF:000049">
    <property type="entry name" value="N-acetyl-D-glucosamine kinase"/>
    <property type="match status" value="1"/>
</dbReference>
<dbReference type="FunFam" id="3.30.420.40:FF:000051">
    <property type="entry name" value="N-acetyl-D-glucosamine kinase"/>
    <property type="match status" value="1"/>
</dbReference>
<dbReference type="Gene3D" id="3.30.420.40">
    <property type="match status" value="2"/>
</dbReference>
<dbReference type="HAMAP" id="MF_01271">
    <property type="entry name" value="GlcNAc_kinase"/>
    <property type="match status" value="1"/>
</dbReference>
<dbReference type="InterPro" id="IPR043129">
    <property type="entry name" value="ATPase_NBD"/>
</dbReference>
<dbReference type="InterPro" id="IPR023505">
    <property type="entry name" value="N-acetyl-D-glucosamine_kinase"/>
</dbReference>
<dbReference type="InterPro" id="IPR000600">
    <property type="entry name" value="ROK"/>
</dbReference>
<dbReference type="InterPro" id="IPR049874">
    <property type="entry name" value="ROK_cs"/>
</dbReference>
<dbReference type="NCBIfam" id="NF009835">
    <property type="entry name" value="PRK13310.1"/>
    <property type="match status" value="1"/>
</dbReference>
<dbReference type="PANTHER" id="PTHR18964:SF162">
    <property type="entry name" value="N-ACETYL-D-GLUCOSAMINE KINASE"/>
    <property type="match status" value="1"/>
</dbReference>
<dbReference type="PANTHER" id="PTHR18964">
    <property type="entry name" value="ROK (REPRESSOR, ORF, KINASE) FAMILY"/>
    <property type="match status" value="1"/>
</dbReference>
<dbReference type="Pfam" id="PF00480">
    <property type="entry name" value="ROK"/>
    <property type="match status" value="1"/>
</dbReference>
<dbReference type="SUPFAM" id="SSF53067">
    <property type="entry name" value="Actin-like ATPase domain"/>
    <property type="match status" value="1"/>
</dbReference>
<dbReference type="PROSITE" id="PS01125">
    <property type="entry name" value="ROK"/>
    <property type="match status" value="1"/>
</dbReference>
<protein>
    <recommendedName>
        <fullName evidence="1">N-acetyl-D-glucosamine kinase</fullName>
        <ecNumber evidence="1">2.7.1.59</ecNumber>
    </recommendedName>
    <alternativeName>
        <fullName evidence="1">GlcNAc kinase</fullName>
    </alternativeName>
</protein>
<reference key="1">
    <citation type="journal article" date="2008" name="J. Bacteriol.">
        <title>Insights into the environmental resistance gene pool from the genome sequence of the multidrug-resistant environmental isolate Escherichia coli SMS-3-5.</title>
        <authorList>
            <person name="Fricke W.F."/>
            <person name="Wright M.S."/>
            <person name="Lindell A.H."/>
            <person name="Harkins D.M."/>
            <person name="Baker-Austin C."/>
            <person name="Ravel J."/>
            <person name="Stepanauskas R."/>
        </authorList>
    </citation>
    <scope>NUCLEOTIDE SEQUENCE [LARGE SCALE GENOMIC DNA]</scope>
    <source>
        <strain>SMS-3-5 / SECEC</strain>
    </source>
</reference>
<feature type="chain" id="PRO_1000140187" description="N-acetyl-D-glucosamine kinase">
    <location>
        <begin position="1"/>
        <end position="303"/>
    </location>
</feature>
<feature type="binding site" evidence="1">
    <location>
        <begin position="4"/>
        <end position="11"/>
    </location>
    <ligand>
        <name>ATP</name>
        <dbReference type="ChEBI" id="CHEBI:30616"/>
    </ligand>
</feature>
<feature type="binding site" evidence="1">
    <location>
        <begin position="133"/>
        <end position="140"/>
    </location>
    <ligand>
        <name>ATP</name>
        <dbReference type="ChEBI" id="CHEBI:30616"/>
    </ligand>
</feature>
<feature type="binding site" evidence="1">
    <location>
        <position position="157"/>
    </location>
    <ligand>
        <name>Zn(2+)</name>
        <dbReference type="ChEBI" id="CHEBI:29105"/>
    </ligand>
</feature>
<feature type="binding site" evidence="1">
    <location>
        <position position="177"/>
    </location>
    <ligand>
        <name>Zn(2+)</name>
        <dbReference type="ChEBI" id="CHEBI:29105"/>
    </ligand>
</feature>
<feature type="binding site" evidence="1">
    <location>
        <position position="179"/>
    </location>
    <ligand>
        <name>Zn(2+)</name>
        <dbReference type="ChEBI" id="CHEBI:29105"/>
    </ligand>
</feature>
<feature type="binding site" evidence="1">
    <location>
        <position position="184"/>
    </location>
    <ligand>
        <name>Zn(2+)</name>
        <dbReference type="ChEBI" id="CHEBI:29105"/>
    </ligand>
</feature>